<comment type="function">
    <text evidence="1">Formation of pseudouridine at positions 38, 39 and 40 in the anticodon stem and loop of transfer RNAs.</text>
</comment>
<comment type="catalytic activity">
    <reaction evidence="1">
        <text>uridine(38/39/40) in tRNA = pseudouridine(38/39/40) in tRNA</text>
        <dbReference type="Rhea" id="RHEA:22376"/>
        <dbReference type="Rhea" id="RHEA-COMP:10085"/>
        <dbReference type="Rhea" id="RHEA-COMP:10087"/>
        <dbReference type="ChEBI" id="CHEBI:65314"/>
        <dbReference type="ChEBI" id="CHEBI:65315"/>
        <dbReference type="EC" id="5.4.99.12"/>
    </reaction>
</comment>
<comment type="subunit">
    <text evidence="1">Homodimer.</text>
</comment>
<comment type="similarity">
    <text evidence="1">Belongs to the tRNA pseudouridine synthase TruA family.</text>
</comment>
<comment type="sequence caution" evidence="2">
    <conflict type="erroneous initiation">
        <sequence resource="EMBL-CDS" id="AAM85168"/>
    </conflict>
</comment>
<comment type="sequence caution" evidence="2">
    <conflict type="erroneous initiation">
        <sequence resource="EMBL-CDS" id="AAS62603"/>
    </conflict>
</comment>
<keyword id="KW-0413">Isomerase</keyword>
<keyword id="KW-1185">Reference proteome</keyword>
<keyword id="KW-0819">tRNA processing</keyword>
<accession>Q8ZD27</accession>
<accession>Q0WDC5</accession>
<reference key="1">
    <citation type="journal article" date="2001" name="Nature">
        <title>Genome sequence of Yersinia pestis, the causative agent of plague.</title>
        <authorList>
            <person name="Parkhill J."/>
            <person name="Wren B.W."/>
            <person name="Thomson N.R."/>
            <person name="Titball R.W."/>
            <person name="Holden M.T.G."/>
            <person name="Prentice M.B."/>
            <person name="Sebaihia M."/>
            <person name="James K.D."/>
            <person name="Churcher C.M."/>
            <person name="Mungall K.L."/>
            <person name="Baker S."/>
            <person name="Basham D."/>
            <person name="Bentley S.D."/>
            <person name="Brooks K."/>
            <person name="Cerdeno-Tarraga A.-M."/>
            <person name="Chillingworth T."/>
            <person name="Cronin A."/>
            <person name="Davies R.M."/>
            <person name="Davis P."/>
            <person name="Dougan G."/>
            <person name="Feltwell T."/>
            <person name="Hamlin N."/>
            <person name="Holroyd S."/>
            <person name="Jagels K."/>
            <person name="Karlyshev A.V."/>
            <person name="Leather S."/>
            <person name="Moule S."/>
            <person name="Oyston P.C.F."/>
            <person name="Quail M.A."/>
            <person name="Rutherford K.M."/>
            <person name="Simmonds M."/>
            <person name="Skelton J."/>
            <person name="Stevens K."/>
            <person name="Whitehead S."/>
            <person name="Barrell B.G."/>
        </authorList>
    </citation>
    <scope>NUCLEOTIDE SEQUENCE [LARGE SCALE GENOMIC DNA]</scope>
    <source>
        <strain>CO-92 / Biovar Orientalis</strain>
    </source>
</reference>
<reference key="2">
    <citation type="journal article" date="2002" name="J. Bacteriol.">
        <title>Genome sequence of Yersinia pestis KIM.</title>
        <authorList>
            <person name="Deng W."/>
            <person name="Burland V."/>
            <person name="Plunkett G. III"/>
            <person name="Boutin A."/>
            <person name="Mayhew G.F."/>
            <person name="Liss P."/>
            <person name="Perna N.T."/>
            <person name="Rose D.J."/>
            <person name="Mau B."/>
            <person name="Zhou S."/>
            <person name="Schwartz D.C."/>
            <person name="Fetherston J.D."/>
            <person name="Lindler L.E."/>
            <person name="Brubaker R.R."/>
            <person name="Plano G.V."/>
            <person name="Straley S.C."/>
            <person name="McDonough K.A."/>
            <person name="Nilles M.L."/>
            <person name="Matson J.S."/>
            <person name="Blattner F.R."/>
            <person name="Perry R.D."/>
        </authorList>
    </citation>
    <scope>NUCLEOTIDE SEQUENCE [LARGE SCALE GENOMIC DNA]</scope>
    <source>
        <strain>KIM10+ / Biovar Mediaevalis</strain>
    </source>
</reference>
<reference key="3">
    <citation type="journal article" date="2004" name="DNA Res.">
        <title>Complete genome sequence of Yersinia pestis strain 91001, an isolate avirulent to humans.</title>
        <authorList>
            <person name="Song Y."/>
            <person name="Tong Z."/>
            <person name="Wang J."/>
            <person name="Wang L."/>
            <person name="Guo Z."/>
            <person name="Han Y."/>
            <person name="Zhang J."/>
            <person name="Pei D."/>
            <person name="Zhou D."/>
            <person name="Qin H."/>
            <person name="Pang X."/>
            <person name="Han Y."/>
            <person name="Zhai J."/>
            <person name="Li M."/>
            <person name="Cui B."/>
            <person name="Qi Z."/>
            <person name="Jin L."/>
            <person name="Dai R."/>
            <person name="Chen F."/>
            <person name="Li S."/>
            <person name="Ye C."/>
            <person name="Du Z."/>
            <person name="Lin W."/>
            <person name="Wang J."/>
            <person name="Yu J."/>
            <person name="Yang H."/>
            <person name="Wang J."/>
            <person name="Huang P."/>
            <person name="Yang R."/>
        </authorList>
    </citation>
    <scope>NUCLEOTIDE SEQUENCE [LARGE SCALE GENOMIC DNA]</scope>
    <source>
        <strain>91001 / Biovar Mediaevalis</strain>
    </source>
</reference>
<sequence length="264" mass="29348">MKIALGIEYNGSRYFGWQRQQEVASVQACLEAALSKVANEPIGVFCAGRTDAGVHATGQVVHFVTSAVRKDAAWTMGVNSHLPADIAVRWVKTVDNDFHARFSATARRYRYIIFSHRYRPAILAQGVTHCYMPLDAEKMERAAQCLLGENDFTSFRAVQCQSRTPWRNVKHVKVTRHGAYIVVDIKANAFVHHMVRNIVGSLIEIGCGNQDVTWMAELLALKDRTRAAATAKADGLYLVSVDYPDHFALPKVPMGPLFLADDEG</sequence>
<dbReference type="EC" id="5.4.99.12" evidence="1"/>
<dbReference type="EMBL" id="AL590842">
    <property type="protein sequence ID" value="CAL21385.1"/>
    <property type="molecule type" value="Genomic_DNA"/>
</dbReference>
<dbReference type="EMBL" id="AE009952">
    <property type="protein sequence ID" value="AAM85168.1"/>
    <property type="status" value="ALT_INIT"/>
    <property type="molecule type" value="Genomic_DNA"/>
</dbReference>
<dbReference type="EMBL" id="AE017042">
    <property type="protein sequence ID" value="AAS62603.1"/>
    <property type="status" value="ALT_INIT"/>
    <property type="molecule type" value="Genomic_DNA"/>
</dbReference>
<dbReference type="PIR" id="AF0337">
    <property type="entry name" value="AF0337"/>
</dbReference>
<dbReference type="RefSeq" id="YP_002347713.1">
    <property type="nucleotide sequence ID" value="NC_003143.1"/>
</dbReference>
<dbReference type="SMR" id="Q8ZD27"/>
<dbReference type="IntAct" id="Q8ZD27">
    <property type="interactions" value="5"/>
</dbReference>
<dbReference type="STRING" id="214092.YPO2766"/>
<dbReference type="PaxDb" id="214092-YPO2766"/>
<dbReference type="DNASU" id="1146546"/>
<dbReference type="EnsemblBacteria" id="AAS62603">
    <property type="protein sequence ID" value="AAS62603"/>
    <property type="gene ID" value="YP_2398"/>
</dbReference>
<dbReference type="KEGG" id="ype:YPO2766"/>
<dbReference type="KEGG" id="ypj:CH55_25"/>
<dbReference type="KEGG" id="ypk:y1599"/>
<dbReference type="KEGG" id="ypl:CH46_2335"/>
<dbReference type="KEGG" id="ypm:YP_2398"/>
<dbReference type="KEGG" id="ypv:BZ15_759"/>
<dbReference type="KEGG" id="ypw:CH59_3653"/>
<dbReference type="PATRIC" id="fig|214092.21.peg.3212"/>
<dbReference type="eggNOG" id="COG0101">
    <property type="taxonomic scope" value="Bacteria"/>
</dbReference>
<dbReference type="HOGENOM" id="CLU_014673_0_2_6"/>
<dbReference type="OMA" id="ADAFCHN"/>
<dbReference type="OrthoDB" id="9811823at2"/>
<dbReference type="Proteomes" id="UP000000815">
    <property type="component" value="Chromosome"/>
</dbReference>
<dbReference type="Proteomes" id="UP000001019">
    <property type="component" value="Chromosome"/>
</dbReference>
<dbReference type="Proteomes" id="UP000002490">
    <property type="component" value="Chromosome"/>
</dbReference>
<dbReference type="GO" id="GO:0009982">
    <property type="term" value="F:pseudouridine synthase activity"/>
    <property type="evidence" value="ECO:0000318"/>
    <property type="project" value="GO_Central"/>
</dbReference>
<dbReference type="GO" id="GO:0003723">
    <property type="term" value="F:RNA binding"/>
    <property type="evidence" value="ECO:0007669"/>
    <property type="project" value="InterPro"/>
</dbReference>
<dbReference type="GO" id="GO:0160147">
    <property type="term" value="F:tRNA pseudouridine(38-40) synthase activity"/>
    <property type="evidence" value="ECO:0007669"/>
    <property type="project" value="UniProtKB-EC"/>
</dbReference>
<dbReference type="GO" id="GO:0031119">
    <property type="term" value="P:tRNA pseudouridine synthesis"/>
    <property type="evidence" value="ECO:0000318"/>
    <property type="project" value="GO_Central"/>
</dbReference>
<dbReference type="CDD" id="cd02570">
    <property type="entry name" value="PseudoU_synth_EcTruA"/>
    <property type="match status" value="1"/>
</dbReference>
<dbReference type="FunFam" id="3.30.70.580:FF:000001">
    <property type="entry name" value="tRNA pseudouridine synthase A"/>
    <property type="match status" value="1"/>
</dbReference>
<dbReference type="FunFam" id="3.30.70.660:FF:000001">
    <property type="entry name" value="tRNA pseudouridine synthase A"/>
    <property type="match status" value="1"/>
</dbReference>
<dbReference type="Gene3D" id="3.30.70.660">
    <property type="entry name" value="Pseudouridine synthase I, catalytic domain, C-terminal subdomain"/>
    <property type="match status" value="1"/>
</dbReference>
<dbReference type="Gene3D" id="3.30.70.580">
    <property type="entry name" value="Pseudouridine synthase I, catalytic domain, N-terminal subdomain"/>
    <property type="match status" value="1"/>
</dbReference>
<dbReference type="HAMAP" id="MF_00171">
    <property type="entry name" value="TruA"/>
    <property type="match status" value="1"/>
</dbReference>
<dbReference type="InterPro" id="IPR020103">
    <property type="entry name" value="PsdUridine_synth_cat_dom_sf"/>
</dbReference>
<dbReference type="InterPro" id="IPR001406">
    <property type="entry name" value="PsdUridine_synth_TruA"/>
</dbReference>
<dbReference type="InterPro" id="IPR020097">
    <property type="entry name" value="PsdUridine_synth_TruA_a/b_dom"/>
</dbReference>
<dbReference type="InterPro" id="IPR020095">
    <property type="entry name" value="PsdUridine_synth_TruA_C"/>
</dbReference>
<dbReference type="InterPro" id="IPR020094">
    <property type="entry name" value="TruA/RsuA/RluB/E/F_N"/>
</dbReference>
<dbReference type="NCBIfam" id="TIGR00071">
    <property type="entry name" value="hisT_truA"/>
    <property type="match status" value="1"/>
</dbReference>
<dbReference type="PANTHER" id="PTHR11142">
    <property type="entry name" value="PSEUDOURIDYLATE SYNTHASE"/>
    <property type="match status" value="1"/>
</dbReference>
<dbReference type="PANTHER" id="PTHR11142:SF0">
    <property type="entry name" value="TRNA PSEUDOURIDINE SYNTHASE-LIKE 1"/>
    <property type="match status" value="1"/>
</dbReference>
<dbReference type="Pfam" id="PF01416">
    <property type="entry name" value="PseudoU_synth_1"/>
    <property type="match status" value="2"/>
</dbReference>
<dbReference type="PIRSF" id="PIRSF001430">
    <property type="entry name" value="tRNA_psdUrid_synth"/>
    <property type="match status" value="1"/>
</dbReference>
<dbReference type="SUPFAM" id="SSF55120">
    <property type="entry name" value="Pseudouridine synthase"/>
    <property type="match status" value="1"/>
</dbReference>
<proteinExistence type="inferred from homology"/>
<feature type="chain" id="PRO_0000057496" description="tRNA pseudouridine synthase A">
    <location>
        <begin position="1"/>
        <end position="264"/>
    </location>
</feature>
<feature type="active site" description="Nucleophile" evidence="1">
    <location>
        <position position="51"/>
    </location>
</feature>
<feature type="binding site" evidence="1">
    <location>
        <position position="109"/>
    </location>
    <ligand>
        <name>substrate</name>
    </ligand>
</feature>
<organism>
    <name type="scientific">Yersinia pestis</name>
    <dbReference type="NCBI Taxonomy" id="632"/>
    <lineage>
        <taxon>Bacteria</taxon>
        <taxon>Pseudomonadati</taxon>
        <taxon>Pseudomonadota</taxon>
        <taxon>Gammaproteobacteria</taxon>
        <taxon>Enterobacterales</taxon>
        <taxon>Yersiniaceae</taxon>
        <taxon>Yersinia</taxon>
    </lineage>
</organism>
<protein>
    <recommendedName>
        <fullName evidence="1">tRNA pseudouridine synthase A</fullName>
        <ecNumber evidence="1">5.4.99.12</ecNumber>
    </recommendedName>
    <alternativeName>
        <fullName evidence="1">tRNA pseudouridine(38-40) synthase</fullName>
    </alternativeName>
    <alternativeName>
        <fullName evidence="1">tRNA pseudouridylate synthase I</fullName>
    </alternativeName>
    <alternativeName>
        <fullName evidence="1">tRNA-uridine isomerase I</fullName>
    </alternativeName>
</protein>
<gene>
    <name evidence="1" type="primary">truA</name>
    <name type="ordered locus">YPO2766</name>
    <name type="ordered locus">y1599</name>
    <name type="ordered locus">YP_2398</name>
</gene>
<name>TRUA_YERPE</name>
<evidence type="ECO:0000255" key="1">
    <source>
        <dbReference type="HAMAP-Rule" id="MF_00171"/>
    </source>
</evidence>
<evidence type="ECO:0000305" key="2"/>